<feature type="signal peptide" evidence="2">
    <location>
        <begin position="1"/>
        <end position="30"/>
    </location>
</feature>
<feature type="chain" id="PRO_0000425541" description="Inactive glutathione hydrolase 2">
    <location>
        <begin position="31"/>
        <end position="569"/>
    </location>
</feature>
<feature type="active site" description="Nucleophile" evidence="1">
    <location>
        <position position="381"/>
    </location>
</feature>
<feature type="binding site" evidence="1">
    <location>
        <position position="107"/>
    </location>
    <ligand>
        <name>L-glutamate</name>
        <dbReference type="ChEBI" id="CHEBI:29985"/>
    </ligand>
</feature>
<feature type="binding site" evidence="1">
    <location>
        <position position="399"/>
    </location>
    <ligand>
        <name>L-glutamate</name>
        <dbReference type="ChEBI" id="CHEBI:29985"/>
    </ligand>
</feature>
<feature type="binding site" evidence="1">
    <location>
        <position position="420"/>
    </location>
    <ligand>
        <name>L-glutamate</name>
        <dbReference type="ChEBI" id="CHEBI:29985"/>
    </ligand>
</feature>
<feature type="binding site" evidence="1">
    <location>
        <begin position="451"/>
        <end position="452"/>
    </location>
    <ligand>
        <name>L-glutamate</name>
        <dbReference type="ChEBI" id="CHEBI:29985"/>
    </ligand>
</feature>
<feature type="glycosylation site" description="N-linked (GlcNAc...) asparagine" evidence="2">
    <location>
        <position position="230"/>
    </location>
</feature>
<feature type="glycosylation site" description="N-linked (GlcNAc...) asparagine" evidence="3">
    <location>
        <position position="511"/>
    </location>
</feature>
<feature type="splice variant" id="VSP_053716" description="In isoform 3." evidence="6">
    <original>WY</original>
    <variation>CPLCPGE</variation>
    <location>
        <begin position="192"/>
        <end position="193"/>
    </location>
</feature>
<feature type="splice variant" id="VSP_033757" description="In isoform 2." evidence="5">
    <location>
        <begin position="404"/>
        <end position="413"/>
    </location>
</feature>
<feature type="mutagenesis site" description="No effect on the absence of autocatalytic cleavage and catalytic activity; when associated with E-193." evidence="4">
    <original>W</original>
    <variation>C</variation>
    <location>
        <position position="192"/>
    </location>
</feature>
<feature type="mutagenesis site" description="No effect on the absence of autocatalytic cleavage and catalytic activity; when associated with C-192." evidence="4">
    <original>Y</original>
    <variation>E</variation>
    <location>
        <position position="193"/>
    </location>
</feature>
<accession>P36268</accession>
<gene>
    <name evidence="7" type="primary">GGT2P</name>
    <name type="synonym">GGT2</name>
</gene>
<organism>
    <name type="scientific">Homo sapiens</name>
    <name type="common">Human</name>
    <dbReference type="NCBI Taxonomy" id="9606"/>
    <lineage>
        <taxon>Eukaryota</taxon>
        <taxon>Metazoa</taxon>
        <taxon>Chordata</taxon>
        <taxon>Craniata</taxon>
        <taxon>Vertebrata</taxon>
        <taxon>Euteleostomi</taxon>
        <taxon>Mammalia</taxon>
        <taxon>Eutheria</taxon>
        <taxon>Euarchontoglires</taxon>
        <taxon>Primates</taxon>
        <taxon>Haplorrhini</taxon>
        <taxon>Catarrhini</taxon>
        <taxon>Hominidae</taxon>
        <taxon>Homo</taxon>
    </lineage>
</organism>
<keyword id="KW-0025">Alternative splicing</keyword>
<keyword id="KW-0963">Cytoplasm</keyword>
<keyword id="KW-0256">Endoplasmic reticulum</keyword>
<keyword id="KW-0325">Glycoprotein</keyword>
<keyword id="KW-1267">Proteomics identification</keyword>
<keyword id="KW-1185">Reference proteome</keyword>
<keyword id="KW-0732">Signal</keyword>
<name>GGT2_HUMAN</name>
<proteinExistence type="evidence at protein level"/>
<dbReference type="EMBL" id="AP000550">
    <property type="status" value="NOT_ANNOTATED_CDS"/>
    <property type="molecule type" value="Genomic_DNA"/>
</dbReference>
<dbReference type="EMBL" id="BG743316">
    <property type="status" value="NOT_ANNOTATED_CDS"/>
    <property type="molecule type" value="mRNA"/>
</dbReference>
<dbReference type="EMBL" id="AA632626">
    <property type="status" value="NOT_ANNOTATED_CDS"/>
    <property type="molecule type" value="mRNA"/>
</dbReference>
<dbReference type="EMBL" id="M30479">
    <property type="protein sequence ID" value="AAA52765.1"/>
    <property type="molecule type" value="Genomic_DNA"/>
</dbReference>
<dbReference type="EMBL" id="M30475">
    <property type="protein sequence ID" value="AAA52765.1"/>
    <property type="status" value="JOINED"/>
    <property type="molecule type" value="Genomic_DNA"/>
</dbReference>
<dbReference type="EMBL" id="M30476">
    <property type="protein sequence ID" value="AAA52765.1"/>
    <property type="status" value="JOINED"/>
    <property type="molecule type" value="Genomic_DNA"/>
</dbReference>
<dbReference type="EMBL" id="M30477">
    <property type="protein sequence ID" value="AAA52765.1"/>
    <property type="status" value="JOINED"/>
    <property type="molecule type" value="Genomic_DNA"/>
</dbReference>
<dbReference type="EMBL" id="M30478">
    <property type="protein sequence ID" value="AAA52765.1"/>
    <property type="status" value="JOINED"/>
    <property type="molecule type" value="Genomic_DNA"/>
</dbReference>
<dbReference type="EMBL" id="M30474">
    <property type="protein sequence ID" value="AAA52548.1"/>
    <property type="molecule type" value="mRNA"/>
</dbReference>
<dbReference type="PIR" id="A36742">
    <property type="entry name" value="A36742"/>
</dbReference>
<dbReference type="SMR" id="P36268"/>
<dbReference type="FunCoup" id="P36268">
    <property type="interactions" value="93"/>
</dbReference>
<dbReference type="IntAct" id="P36268">
    <property type="interactions" value="1"/>
</dbReference>
<dbReference type="STRING" id="9606.ENSP00000385721"/>
<dbReference type="MEROPS" id="T03.015"/>
<dbReference type="GlyConnect" id="1396">
    <property type="glycosylation" value="4 N-Linked glycans (2 sites)"/>
</dbReference>
<dbReference type="GlyCosmos" id="P36268">
    <property type="glycosylation" value="4 sites, 5 glycans"/>
</dbReference>
<dbReference type="GlyGen" id="P36268">
    <property type="glycosylation" value="7 sites, 5 N-linked glycans (3 sites), 1 O-linked glycan (3 sites)"/>
</dbReference>
<dbReference type="iPTMnet" id="P36268"/>
<dbReference type="PhosphoSitePlus" id="P36268"/>
<dbReference type="BioMuta" id="GGT2"/>
<dbReference type="DMDM" id="189047137"/>
<dbReference type="jPOST" id="P36268"/>
<dbReference type="MassIVE" id="P36268"/>
<dbReference type="PaxDb" id="9606-ENSP00000385721"/>
<dbReference type="PeptideAtlas" id="P36268"/>
<dbReference type="Pumba" id="P36268"/>
<dbReference type="Antibodypedia" id="23460">
    <property type="antibodies" value="66 antibodies from 13 providers"/>
</dbReference>
<dbReference type="UCSC" id="uc062byb.1">
    <molecule id="P36268-1"/>
    <property type="organism name" value="human"/>
</dbReference>
<dbReference type="AGR" id="HGNC:4251"/>
<dbReference type="GeneCards" id="GGT2P"/>
<dbReference type="HGNC" id="HGNC:4251">
    <property type="gene designation" value="GGT2P"/>
</dbReference>
<dbReference type="MIM" id="137181">
    <property type="type" value="gene"/>
</dbReference>
<dbReference type="neXtProt" id="NX_P36268"/>
<dbReference type="VEuPathDB" id="HostDB:ENSG00000133475"/>
<dbReference type="eggNOG" id="KOG2410">
    <property type="taxonomic scope" value="Eukaryota"/>
</dbReference>
<dbReference type="HOGENOM" id="CLU_014813_4_1_1"/>
<dbReference type="InParanoid" id="P36268"/>
<dbReference type="PAN-GO" id="P36268">
    <property type="GO annotations" value="5 GO annotations based on evolutionary models"/>
</dbReference>
<dbReference type="PhylomeDB" id="P36268"/>
<dbReference type="TreeFam" id="TF313608"/>
<dbReference type="PathwayCommons" id="P36268"/>
<dbReference type="SignaLink" id="P36268"/>
<dbReference type="ChiTaRS" id="GGT2">
    <property type="organism name" value="human"/>
</dbReference>
<dbReference type="Pharos" id="P36268">
    <property type="development level" value="Tbio"/>
</dbReference>
<dbReference type="PRO" id="PR:P36268"/>
<dbReference type="Proteomes" id="UP000005640">
    <property type="component" value="Chromosome 22"/>
</dbReference>
<dbReference type="RNAct" id="P36268">
    <property type="molecule type" value="protein"/>
</dbReference>
<dbReference type="Bgee" id="ENSG00000133475">
    <property type="expression patterns" value="Expressed in primordial germ cell in gonad and 53 other cell types or tissues"/>
</dbReference>
<dbReference type="ExpressionAtlas" id="P36268">
    <property type="expression patterns" value="baseline and differential"/>
</dbReference>
<dbReference type="GO" id="GO:0005783">
    <property type="term" value="C:endoplasmic reticulum"/>
    <property type="evidence" value="ECO:0000314"/>
    <property type="project" value="UniProtKB"/>
</dbReference>
<dbReference type="GO" id="GO:0070062">
    <property type="term" value="C:extracellular exosome"/>
    <property type="evidence" value="ECO:0007005"/>
    <property type="project" value="UniProtKB"/>
</dbReference>
<dbReference type="GO" id="GO:0048471">
    <property type="term" value="C:perinuclear region of cytoplasm"/>
    <property type="evidence" value="ECO:0000314"/>
    <property type="project" value="UniProtKB"/>
</dbReference>
<dbReference type="GO" id="GO:0005886">
    <property type="term" value="C:plasma membrane"/>
    <property type="evidence" value="ECO:0000318"/>
    <property type="project" value="GO_Central"/>
</dbReference>
<dbReference type="GO" id="GO:0006751">
    <property type="term" value="P:glutathione catabolic process"/>
    <property type="evidence" value="ECO:0000318"/>
    <property type="project" value="GO_Central"/>
</dbReference>
<dbReference type="GO" id="GO:1901750">
    <property type="term" value="P:leukotriene D4 biosynthetic process"/>
    <property type="evidence" value="ECO:0000250"/>
    <property type="project" value="UniProtKB"/>
</dbReference>
<dbReference type="GO" id="GO:0031179">
    <property type="term" value="P:peptide modification"/>
    <property type="evidence" value="ECO:0000318"/>
    <property type="project" value="GO_Central"/>
</dbReference>
<dbReference type="GO" id="GO:0002682">
    <property type="term" value="P:regulation of immune system process"/>
    <property type="evidence" value="ECO:0000318"/>
    <property type="project" value="GO_Central"/>
</dbReference>
<dbReference type="GO" id="GO:0050727">
    <property type="term" value="P:regulation of inflammatory response"/>
    <property type="evidence" value="ECO:0000318"/>
    <property type="project" value="GO_Central"/>
</dbReference>
<dbReference type="FunFam" id="3.60.20.40:FF:000007">
    <property type="entry name" value="Glutathione hydrolase 1 proenzyme"/>
    <property type="match status" value="1"/>
</dbReference>
<dbReference type="FunFam" id="1.10.246.130:FF:000002">
    <property type="entry name" value="glutathione hydrolase 1 proenzyme"/>
    <property type="match status" value="1"/>
</dbReference>
<dbReference type="Gene3D" id="1.10.246.130">
    <property type="match status" value="1"/>
</dbReference>
<dbReference type="Gene3D" id="3.60.20.40">
    <property type="match status" value="1"/>
</dbReference>
<dbReference type="InterPro" id="IPR055262">
    <property type="entry name" value="GGT_CS"/>
</dbReference>
<dbReference type="InterPro" id="IPR043138">
    <property type="entry name" value="GGT_lsub_C"/>
</dbReference>
<dbReference type="InterPro" id="IPR000101">
    <property type="entry name" value="GGT_peptidase"/>
</dbReference>
<dbReference type="InterPro" id="IPR043137">
    <property type="entry name" value="GGT_ssub"/>
</dbReference>
<dbReference type="InterPro" id="IPR029055">
    <property type="entry name" value="Ntn_hydrolases_N"/>
</dbReference>
<dbReference type="PANTHER" id="PTHR11686">
    <property type="entry name" value="GAMMA GLUTAMYL TRANSPEPTIDASE"/>
    <property type="match status" value="1"/>
</dbReference>
<dbReference type="PANTHER" id="PTHR11686:SF56">
    <property type="entry name" value="GLUTATHIONE HYDROLASE 1 PROENZYME-RELATED"/>
    <property type="match status" value="1"/>
</dbReference>
<dbReference type="Pfam" id="PF01019">
    <property type="entry name" value="G_glu_transpept"/>
    <property type="match status" value="1"/>
</dbReference>
<dbReference type="PRINTS" id="PR01210">
    <property type="entry name" value="GGTRANSPTASE"/>
</dbReference>
<dbReference type="SUPFAM" id="SSF56235">
    <property type="entry name" value="N-terminal nucleophile aminohydrolases (Ntn hydrolases)"/>
    <property type="match status" value="1"/>
</dbReference>
<dbReference type="PROSITE" id="PS00462">
    <property type="entry name" value="G_GLU_TRANSPEPTIDASE"/>
    <property type="match status" value="1"/>
</dbReference>
<reference key="1">
    <citation type="journal article" date="1999" name="Nature">
        <title>The DNA sequence of human chromosome 22.</title>
        <authorList>
            <person name="Dunham I."/>
            <person name="Hunt A.R."/>
            <person name="Collins J.E."/>
            <person name="Bruskiewich R."/>
            <person name="Beare D.M."/>
            <person name="Clamp M."/>
            <person name="Smink L.J."/>
            <person name="Ainscough R."/>
            <person name="Almeida J.P."/>
            <person name="Babbage A.K."/>
            <person name="Bagguley C."/>
            <person name="Bailey J."/>
            <person name="Barlow K.F."/>
            <person name="Bates K.N."/>
            <person name="Beasley O.P."/>
            <person name="Bird C.P."/>
            <person name="Blakey S.E."/>
            <person name="Bridgeman A.M."/>
            <person name="Buck D."/>
            <person name="Burgess J."/>
            <person name="Burrill W.D."/>
            <person name="Burton J."/>
            <person name="Carder C."/>
            <person name="Carter N.P."/>
            <person name="Chen Y."/>
            <person name="Clark G."/>
            <person name="Clegg S.M."/>
            <person name="Cobley V.E."/>
            <person name="Cole C.G."/>
            <person name="Collier R.E."/>
            <person name="Connor R."/>
            <person name="Conroy D."/>
            <person name="Corby N.R."/>
            <person name="Coville G.J."/>
            <person name="Cox A.V."/>
            <person name="Davis J."/>
            <person name="Dawson E."/>
            <person name="Dhami P.D."/>
            <person name="Dockree C."/>
            <person name="Dodsworth S.J."/>
            <person name="Durbin R.M."/>
            <person name="Ellington A.G."/>
            <person name="Evans K.L."/>
            <person name="Fey J.M."/>
            <person name="Fleming K."/>
            <person name="French L."/>
            <person name="Garner A.A."/>
            <person name="Gilbert J.G.R."/>
            <person name="Goward M.E."/>
            <person name="Grafham D.V."/>
            <person name="Griffiths M.N.D."/>
            <person name="Hall C."/>
            <person name="Hall R.E."/>
            <person name="Hall-Tamlyn G."/>
            <person name="Heathcott R.W."/>
            <person name="Ho S."/>
            <person name="Holmes S."/>
            <person name="Hunt S.E."/>
            <person name="Jones M.C."/>
            <person name="Kershaw J."/>
            <person name="Kimberley A.M."/>
            <person name="King A."/>
            <person name="Laird G.K."/>
            <person name="Langford C.F."/>
            <person name="Leversha M.A."/>
            <person name="Lloyd C."/>
            <person name="Lloyd D.M."/>
            <person name="Martyn I.D."/>
            <person name="Mashreghi-Mohammadi M."/>
            <person name="Matthews L.H."/>
            <person name="Mccann O.T."/>
            <person name="Mcclay J."/>
            <person name="Mclaren S."/>
            <person name="McMurray A.A."/>
            <person name="Milne S.A."/>
            <person name="Mortimore B.J."/>
            <person name="Odell C.N."/>
            <person name="Pavitt R."/>
            <person name="Pearce A.V."/>
            <person name="Pearson D."/>
            <person name="Phillimore B.J.C.T."/>
            <person name="Phillips S.H."/>
            <person name="Plumb R.W."/>
            <person name="Ramsay H."/>
            <person name="Ramsey Y."/>
            <person name="Rogers L."/>
            <person name="Ross M.T."/>
            <person name="Scott C.E."/>
            <person name="Sehra H.K."/>
            <person name="Skuce C.D."/>
            <person name="Smalley S."/>
            <person name="Smith M.L."/>
            <person name="Soderlund C."/>
            <person name="Spragon L."/>
            <person name="Steward C.A."/>
            <person name="Sulston J.E."/>
            <person name="Swann R.M."/>
            <person name="Vaudin M."/>
            <person name="Wall M."/>
            <person name="Wallis J.M."/>
            <person name="Whiteley M.N."/>
            <person name="Willey D.L."/>
            <person name="Williams L."/>
            <person name="Williams S.A."/>
            <person name="Williamson H."/>
            <person name="Wilmer T.E."/>
            <person name="Wilming L."/>
            <person name="Wright C.L."/>
            <person name="Hubbard T."/>
            <person name="Bentley D.R."/>
            <person name="Beck S."/>
            <person name="Rogers J."/>
            <person name="Shimizu N."/>
            <person name="Minoshima S."/>
            <person name="Kawasaki K."/>
            <person name="Sasaki T."/>
            <person name="Asakawa S."/>
            <person name="Kudoh J."/>
            <person name="Shintani A."/>
            <person name="Shibuya K."/>
            <person name="Yoshizaki Y."/>
            <person name="Aoki N."/>
            <person name="Mitsuyama S."/>
            <person name="Roe B.A."/>
            <person name="Chen F."/>
            <person name="Chu L."/>
            <person name="Crabtree J."/>
            <person name="Deschamps S."/>
            <person name="Do A."/>
            <person name="Do T."/>
            <person name="Dorman A."/>
            <person name="Fang F."/>
            <person name="Fu Y."/>
            <person name="Hu P."/>
            <person name="Hua A."/>
            <person name="Kenton S."/>
            <person name="Lai H."/>
            <person name="Lao H.I."/>
            <person name="Lewis J."/>
            <person name="Lewis S."/>
            <person name="Lin S.-P."/>
            <person name="Loh P."/>
            <person name="Malaj E."/>
            <person name="Nguyen T."/>
            <person name="Pan H."/>
            <person name="Phan S."/>
            <person name="Qi S."/>
            <person name="Qian Y."/>
            <person name="Ray L."/>
            <person name="Ren Q."/>
            <person name="Shaull S."/>
            <person name="Sloan D."/>
            <person name="Song L."/>
            <person name="Wang Q."/>
            <person name="Wang Y."/>
            <person name="Wang Z."/>
            <person name="White J."/>
            <person name="Willingham D."/>
            <person name="Wu H."/>
            <person name="Yao Z."/>
            <person name="Zhan M."/>
            <person name="Zhang G."/>
            <person name="Chissoe S."/>
            <person name="Murray J."/>
            <person name="Miller N."/>
            <person name="Minx P."/>
            <person name="Fulton R."/>
            <person name="Johnson D."/>
            <person name="Bemis G."/>
            <person name="Bentley D."/>
            <person name="Bradshaw H."/>
            <person name="Bourne S."/>
            <person name="Cordes M."/>
            <person name="Du Z."/>
            <person name="Fulton L."/>
            <person name="Goela D."/>
            <person name="Graves T."/>
            <person name="Hawkins J."/>
            <person name="Hinds K."/>
            <person name="Kemp K."/>
            <person name="Latreille P."/>
            <person name="Layman D."/>
            <person name="Ozersky P."/>
            <person name="Rohlfing T."/>
            <person name="Scheet P."/>
            <person name="Walker C."/>
            <person name="Wamsley A."/>
            <person name="Wohldmann P."/>
            <person name="Pepin K."/>
            <person name="Nelson J."/>
            <person name="Korf I."/>
            <person name="Bedell J.A."/>
            <person name="Hillier L.W."/>
            <person name="Mardis E."/>
            <person name="Waterston R."/>
            <person name="Wilson R."/>
            <person name="Emanuel B.S."/>
            <person name="Shaikh T."/>
            <person name="Kurahashi H."/>
            <person name="Saitta S."/>
            <person name="Budarf M.L."/>
            <person name="McDermid H.E."/>
            <person name="Johnson A."/>
            <person name="Wong A.C.C."/>
            <person name="Morrow B.E."/>
            <person name="Edelmann L."/>
            <person name="Kim U.J."/>
            <person name="Shizuya H."/>
            <person name="Simon M.I."/>
            <person name="Dumanski J.P."/>
            <person name="Peyrard M."/>
            <person name="Kedra D."/>
            <person name="Seroussi E."/>
            <person name="Fransson I."/>
            <person name="Tapia I."/>
            <person name="Bruder C.E."/>
            <person name="O'Brien K.P."/>
            <person name="Wilkinson P."/>
            <person name="Bodenteich A."/>
            <person name="Hartman K."/>
            <person name="Hu X."/>
            <person name="Khan A.S."/>
            <person name="Lane L."/>
            <person name="Tilahun Y."/>
            <person name="Wright H."/>
        </authorList>
    </citation>
    <scope>NUCLEOTIDE SEQUENCE [LARGE SCALE GENOMIC DNA]</scope>
</reference>
<reference key="2">
    <citation type="journal article" date="1989" name="Biochem. Biophys. Res. Commun.">
        <title>Different gamma-glutamyl transpeptidase mRNAs are expressed in human liver and kidney.</title>
        <authorList>
            <person name="Pawlak A."/>
            <person name="Wu S.-J."/>
            <person name="Bulle F."/>
            <person name="Suzuki A."/>
            <person name="Chikhi N."/>
            <person name="Ferry N."/>
            <person name="Baik J.-H."/>
            <person name="Siegrist S."/>
            <person name="Guellaen G."/>
        </authorList>
    </citation>
    <scope>NUCLEOTIDE SEQUENCE [GENOMIC DNA / MRNA] OF 362-569 (ISOFORM 2)</scope>
</reference>
<reference key="3">
    <citation type="journal article" date="2009" name="J. Proteome Res.">
        <title>Glycoproteomics analysis of human liver tissue by combination of multiple enzyme digestion and hydrazide chemistry.</title>
        <authorList>
            <person name="Chen R."/>
            <person name="Jiang X."/>
            <person name="Sun D."/>
            <person name="Han G."/>
            <person name="Wang F."/>
            <person name="Ye M."/>
            <person name="Wang L."/>
            <person name="Zou H."/>
        </authorList>
    </citation>
    <scope>GLYCOSYLATION [LARGE SCALE ANALYSIS] AT ASN-511</scope>
    <source>
        <tissue>Liver</tissue>
    </source>
</reference>
<reference key="4">
    <citation type="journal article" date="2013" name="Antioxid. Redox Signal.">
        <title>Human GGT2 does not autocleave into a functional enzyme: a cautionary tale for interpretation of microarray data on redox signaling.</title>
        <authorList>
            <person name="West M.B."/>
            <person name="Wickham S."/>
            <person name="Parks E.E."/>
            <person name="Sherry D.M."/>
            <person name="Hanigan M.H."/>
        </authorList>
    </citation>
    <scope>ALTERNATIVE SPLICING (ISOFORMS 1; 2 AND 3)</scope>
    <scope>ABSENCE OF CATALYTIC ACTIVITY AND AUTOCATALYTIC CLEAVAGE</scope>
    <scope>SUBCELLULAR LOCATION</scope>
    <scope>GLYCOSYLATION</scope>
    <scope>MUTAGENESIS OF TRP-192 AND TYR-193</scope>
</reference>
<protein>
    <recommendedName>
        <fullName>Inactive glutathione hydrolase 2</fullName>
    </recommendedName>
    <alternativeName>
        <fullName evidence="7">Gamma-glutamyltransferase 2 pseudogene</fullName>
    </alternativeName>
    <alternativeName>
        <fullName>Inactive gamma-glutamyltranspeptidase 2</fullName>
        <shortName>GGT 2</shortName>
    </alternativeName>
</protein>
<sequence length="569" mass="61771">MKKKLVVLGLLAVVLVLVIVGLCLWLPSASKEPDNHVYTRAAMAADAKQCLEIGRDTLRDGGSAVDAAIAALLCVGLMNAHSMGIGVGLFLTIYNSTTGKAEVINAREVAPRLAFASMFNSSEQSQKGGLSVAVPGEIRGYELAHQRHGRLPWARLFQPSIQLARQGFPVGKGLAAVLENKRTVIEQQPVLWYVFCRDRKVLREGERLTLPRLADTYEMLAIEGAQAFYNGSLMAQIVKDIQAAGGIVTAEDLNNYRAELIEHPLNISLGDAVLYMPSARLSGPVLALILNILKGYNFSRESVETPEQKGLTYHRIVEAFRFAYAKRTLLGDPKFVDVTEVVRNMTSEFFAAQLRSQISDHTTHPISYYKPEFYTPDDGGTAHLSVVAEDGSAVSATSTINLYFGSKVCSPVSGILFNNEWTTSALPAFTNEFGAPPSPANFIQPGKQPLLSMCLTIMVGQDGQVRMVVGAAGGTQITTDTALAIIYNLWFGYDVKRAVEEPRLHNKLLPNVTTVERNIDQAVTAALETRHHHTQIASTFIAVVQAIVRTAGGWAAALDSRKGGEPAGY</sequence>
<comment type="function">
    <molecule>Isoform 1</molecule>
    <text evidence="4">Lacks catalytic activity due to its inability to undergo the autocatalytic cleavage needed to produce a mature, enzymatically active heterodimer.</text>
</comment>
<comment type="function">
    <molecule>Isoform 2</molecule>
    <text evidence="4">Lacks catalytic activity due to its inability to undergo the autocatalytic cleavage needed to produce a mature, enzymatically active heterodimer.</text>
</comment>
<comment type="function">
    <molecule>Isoform 3</molecule>
    <text evidence="4">Lacks catalytic activity due to its inability to undergo the autocatalytic cleavage needed to produce a mature, enzymatically active heterodimer.</text>
</comment>
<comment type="interaction">
    <interactant intactId="EBI-54767918">
        <id>P36268</id>
    </interactant>
    <interactant intactId="EBI-2868937">
        <id>P19440</id>
        <label>GGT1</label>
    </interactant>
    <organismsDiffer>false</organismsDiffer>
    <experiments>2</experiments>
</comment>
<comment type="subcellular location">
    <subcellularLocation>
        <location evidence="4">Cytoplasm</location>
        <location evidence="4">Perinuclear region</location>
    </subcellularLocation>
    <subcellularLocation>
        <location evidence="4">Endoplasmic reticulum</location>
    </subcellularLocation>
    <text>Co-localizes with calnexin in the endoplasmic reticulum.</text>
</comment>
<comment type="alternative products">
    <event type="alternative splicing"/>
    <isoform>
        <id>P36268-1</id>
        <name>1</name>
        <sequence type="displayed"/>
    </isoform>
    <isoform>
        <id>P36268-2</id>
        <name>2</name>
        <sequence type="described" ref="VSP_033757"/>
    </isoform>
    <isoform>
        <id>P36268-3</id>
        <name>3</name>
        <sequence type="described" ref="VSP_053716"/>
    </isoform>
</comment>
<comment type="tissue specificity">
    <text>Highly expressed in fetal and adult kidney and liver.</text>
</comment>
<comment type="PTM">
    <text evidence="4">Not cleaved by autocatalysis into a large and a small subunit resulting in loss of cell membrane localization and catalytic activity.</text>
</comment>
<comment type="similarity">
    <text evidence="6">Belongs to the gamma-glutamyltransferase family.</text>
</comment>
<evidence type="ECO:0000250" key="1"/>
<evidence type="ECO:0000255" key="2"/>
<evidence type="ECO:0000269" key="3">
    <source>
    </source>
</evidence>
<evidence type="ECO:0000269" key="4">
    <source>
    </source>
</evidence>
<evidence type="ECO:0000303" key="5">
    <source>
    </source>
</evidence>
<evidence type="ECO:0000305" key="6"/>
<evidence type="ECO:0000312" key="7">
    <source>
        <dbReference type="HGNC" id="HGNC:4251"/>
    </source>
</evidence>